<feature type="transit peptide" description="Chloroplast" evidence="1">
    <location>
        <begin position="1"/>
        <end position="74"/>
    </location>
</feature>
<feature type="chain" id="PRO_0000023297" description="Protochlorophyllide reductase A, chloroplastic">
    <location>
        <begin position="75"/>
        <end position="388"/>
    </location>
</feature>
<keyword id="KW-0149">Chlorophyll biosynthesis</keyword>
<keyword id="KW-0150">Chloroplast</keyword>
<keyword id="KW-0521">NADP</keyword>
<keyword id="KW-0560">Oxidoreductase</keyword>
<keyword id="KW-0602">Photosynthesis</keyword>
<keyword id="KW-0934">Plastid</keyword>
<keyword id="KW-1185">Reference proteome</keyword>
<keyword id="KW-0809">Transit peptide</keyword>
<accession>Q41578</accession>
<comment type="function">
    <text>Phototransformation of protochlorophyllide (Pchlide) to chlorophyllide (Chlide).</text>
</comment>
<comment type="catalytic activity">
    <reaction>
        <text>chlorophyllide a + NADP(+) = protochlorophyllide a + NADPH + H(+)</text>
        <dbReference type="Rhea" id="RHEA:11132"/>
        <dbReference type="ChEBI" id="CHEBI:15378"/>
        <dbReference type="ChEBI" id="CHEBI:57783"/>
        <dbReference type="ChEBI" id="CHEBI:58349"/>
        <dbReference type="ChEBI" id="CHEBI:83348"/>
        <dbReference type="ChEBI" id="CHEBI:83350"/>
        <dbReference type="EC" id="1.3.1.33"/>
    </reaction>
</comment>
<comment type="pathway">
    <text>Porphyrin-containing compound metabolism; chlorophyll biosynthesis.</text>
</comment>
<comment type="subcellular location">
    <subcellularLocation>
        <location>Plastid</location>
        <location>Chloroplast</location>
    </subcellularLocation>
</comment>
<comment type="similarity">
    <text evidence="2">Belongs to the short-chain dehydrogenases/reductases (SDR) family. POR subfamily.</text>
</comment>
<reference key="1">
    <citation type="journal article" date="1993" name="Biochem. J.">
        <title>Cloning, characterization and import studies on protochlorophyllide reductase from wheat (Triticum aestivum).</title>
        <authorList>
            <person name="Teakle G.R."/>
            <person name="Griffiths W.T."/>
        </authorList>
    </citation>
    <scope>NUCLEOTIDE SEQUENCE [GENOMIC DNA]</scope>
    <source>
        <tissue>Shoot</tissue>
    </source>
</reference>
<protein>
    <recommendedName>
        <fullName>Protochlorophyllide reductase A, chloroplastic</fullName>
        <shortName>PCR A</shortName>
        <ecNumber>1.3.1.33</ecNumber>
    </recommendedName>
    <alternativeName>
        <fullName>NADPH-protochlorophyllide oxidoreductase A</fullName>
        <shortName>POR A</shortName>
    </alternativeName>
</protein>
<evidence type="ECO:0000250" key="1"/>
<evidence type="ECO:0000305" key="2"/>
<gene>
    <name type="primary">PORA</name>
</gene>
<sequence>MALQLLPSTLSVPKKGSSMGAAAVKDTAAFLGVSSKAKKASLAVRTQVATAPSSVTTSPGSATAKPSGKKTLRQGVVVITGASSGLGLAAAKALAETGKWHVVMACRDFLKASKAAKAAGMADGSYTVMHLDLASLDSVRQFVDAFRRAEMPLDVLVCNAAIYRPTARTPTFTADGHEMSVGVNHLGHFLLARLLMEDLQKSDYPSRRMVIVGSITGNSNTLAGNVPPKASLGDLRGLAGGLSGASGSAMIDGDESFDGAKAYKDSKVCNMLTMQEFHRRYHEETGITFSSLYPGCIATTGLFREHIPLFRTLFPPFQKFVTKGFVSEAESGKRLAQVVAEPSLTKSGVYWSWNKDSASFENQLSQEASDPEKARKVWELSEKLVGLA</sequence>
<name>PORA_WHEAT</name>
<proteinExistence type="inferred from homology"/>
<organism>
    <name type="scientific">Triticum aestivum</name>
    <name type="common">Wheat</name>
    <dbReference type="NCBI Taxonomy" id="4565"/>
    <lineage>
        <taxon>Eukaryota</taxon>
        <taxon>Viridiplantae</taxon>
        <taxon>Streptophyta</taxon>
        <taxon>Embryophyta</taxon>
        <taxon>Tracheophyta</taxon>
        <taxon>Spermatophyta</taxon>
        <taxon>Magnoliopsida</taxon>
        <taxon>Liliopsida</taxon>
        <taxon>Poales</taxon>
        <taxon>Poaceae</taxon>
        <taxon>BOP clade</taxon>
        <taxon>Pooideae</taxon>
        <taxon>Triticodae</taxon>
        <taxon>Triticeae</taxon>
        <taxon>Triticinae</taxon>
        <taxon>Triticum</taxon>
    </lineage>
</organism>
<dbReference type="EC" id="1.3.1.33"/>
<dbReference type="EMBL" id="X76532">
    <property type="protein sequence ID" value="CAA54042.1"/>
    <property type="molecule type" value="Genomic_DNA"/>
</dbReference>
<dbReference type="PIR" id="S39394">
    <property type="entry name" value="S39394"/>
</dbReference>
<dbReference type="SMR" id="Q41578"/>
<dbReference type="STRING" id="4565.Q41578"/>
<dbReference type="PaxDb" id="4565-Traes_2BL_F22336B90.2"/>
<dbReference type="EnsemblPlants" id="TraesCAD_scaffold_034475_01G000100.1">
    <property type="protein sequence ID" value="TraesCAD_scaffold_034475_01G000100.1"/>
    <property type="gene ID" value="TraesCAD_scaffold_034475_01G000100"/>
</dbReference>
<dbReference type="Gramene" id="TraesCAD_scaffold_034475_01G000100.1">
    <property type="protein sequence ID" value="TraesCAD_scaffold_034475_01G000100.1"/>
    <property type="gene ID" value="TraesCAD_scaffold_034475_01G000100"/>
</dbReference>
<dbReference type="eggNOG" id="KOG1208">
    <property type="taxonomic scope" value="Eukaryota"/>
</dbReference>
<dbReference type="BRENDA" id="1.3.1.33">
    <property type="organism ID" value="6500"/>
</dbReference>
<dbReference type="UniPathway" id="UPA00668"/>
<dbReference type="Proteomes" id="UP000019116">
    <property type="component" value="Unplaced"/>
</dbReference>
<dbReference type="ExpressionAtlas" id="Q41578">
    <property type="expression patterns" value="baseline and differential"/>
</dbReference>
<dbReference type="GO" id="GO:0009507">
    <property type="term" value="C:chloroplast"/>
    <property type="evidence" value="ECO:0007669"/>
    <property type="project" value="UniProtKB-SubCell"/>
</dbReference>
<dbReference type="GO" id="GO:0016630">
    <property type="term" value="F:protochlorophyllide reductase activity"/>
    <property type="evidence" value="ECO:0007669"/>
    <property type="project" value="UniProtKB-EC"/>
</dbReference>
<dbReference type="GO" id="GO:0015995">
    <property type="term" value="P:chlorophyll biosynthetic process"/>
    <property type="evidence" value="ECO:0007669"/>
    <property type="project" value="UniProtKB-UniPathway"/>
</dbReference>
<dbReference type="GO" id="GO:0015979">
    <property type="term" value="P:photosynthesis"/>
    <property type="evidence" value="ECO:0007669"/>
    <property type="project" value="UniProtKB-KW"/>
</dbReference>
<dbReference type="CDD" id="cd09810">
    <property type="entry name" value="LPOR_like_SDR_c_like"/>
    <property type="match status" value="1"/>
</dbReference>
<dbReference type="Gene3D" id="3.40.50.720">
    <property type="entry name" value="NAD(P)-binding Rossmann-like Domain"/>
    <property type="match status" value="1"/>
</dbReference>
<dbReference type="InterPro" id="IPR036291">
    <property type="entry name" value="NAD(P)-bd_dom_sf"/>
</dbReference>
<dbReference type="InterPro" id="IPR005979">
    <property type="entry name" value="Prochl_reduct"/>
</dbReference>
<dbReference type="InterPro" id="IPR002347">
    <property type="entry name" value="SDR_fam"/>
</dbReference>
<dbReference type="NCBIfam" id="TIGR01289">
    <property type="entry name" value="LPOR"/>
    <property type="match status" value="1"/>
</dbReference>
<dbReference type="PANTHER" id="PTHR44419:SF6">
    <property type="entry name" value="PROTOCHLOROPHYLLIDE REDUCTASE A, CHLOROPLASTIC"/>
    <property type="match status" value="1"/>
</dbReference>
<dbReference type="PANTHER" id="PTHR44419">
    <property type="entry name" value="PROTOCHLOROPHYLLIDE REDUCTASE C, CHLOROPLASTIC"/>
    <property type="match status" value="1"/>
</dbReference>
<dbReference type="Pfam" id="PF00106">
    <property type="entry name" value="adh_short"/>
    <property type="match status" value="1"/>
</dbReference>
<dbReference type="PRINTS" id="PR00081">
    <property type="entry name" value="GDHRDH"/>
</dbReference>
<dbReference type="SUPFAM" id="SSF51735">
    <property type="entry name" value="NAD(P)-binding Rossmann-fold domains"/>
    <property type="match status" value="1"/>
</dbReference>